<gene>
    <name type="primary">rps4</name>
</gene>
<keyword id="KW-0150">Chloroplast</keyword>
<keyword id="KW-0934">Plastid</keyword>
<keyword id="KW-0687">Ribonucleoprotein</keyword>
<keyword id="KW-0689">Ribosomal protein</keyword>
<keyword id="KW-0694">RNA-binding</keyword>
<keyword id="KW-0699">rRNA-binding</keyword>
<feature type="chain" id="PRO_0000322375" description="Small ribosomal subunit protein uS4c">
    <location>
        <begin position="1"/>
        <end position="202"/>
    </location>
</feature>
<feature type="domain" description="S4 RNA-binding">
    <location>
        <begin position="90"/>
        <end position="152"/>
    </location>
</feature>
<feature type="region of interest" description="Disordered" evidence="2">
    <location>
        <begin position="20"/>
        <end position="43"/>
    </location>
</feature>
<proteinExistence type="inferred from homology"/>
<name>RR4_RHDSA</name>
<accession>A6MVT7</accession>
<geneLocation type="chloroplast"/>
<protein>
    <recommendedName>
        <fullName evidence="3">Small ribosomal subunit protein uS4c</fullName>
    </recommendedName>
    <alternativeName>
        <fullName>30S ribosomal protein S4, chloroplastic</fullName>
    </alternativeName>
</protein>
<evidence type="ECO:0000250" key="1"/>
<evidence type="ECO:0000256" key="2">
    <source>
        <dbReference type="SAM" id="MobiDB-lite"/>
    </source>
</evidence>
<evidence type="ECO:0000305" key="3"/>
<dbReference type="EMBL" id="EF508371">
    <property type="protein sequence ID" value="ABO70739.1"/>
    <property type="molecule type" value="Genomic_DNA"/>
</dbReference>
<dbReference type="RefSeq" id="YP_001293516.1">
    <property type="nucleotide sequence ID" value="NC_009573.1"/>
</dbReference>
<dbReference type="SMR" id="A6MVT7"/>
<dbReference type="GeneID" id="5228622"/>
<dbReference type="GO" id="GO:0009507">
    <property type="term" value="C:chloroplast"/>
    <property type="evidence" value="ECO:0007669"/>
    <property type="project" value="UniProtKB-SubCell"/>
</dbReference>
<dbReference type="GO" id="GO:0015935">
    <property type="term" value="C:small ribosomal subunit"/>
    <property type="evidence" value="ECO:0007669"/>
    <property type="project" value="InterPro"/>
</dbReference>
<dbReference type="GO" id="GO:0019843">
    <property type="term" value="F:rRNA binding"/>
    <property type="evidence" value="ECO:0007669"/>
    <property type="project" value="UniProtKB-UniRule"/>
</dbReference>
<dbReference type="GO" id="GO:0003735">
    <property type="term" value="F:structural constituent of ribosome"/>
    <property type="evidence" value="ECO:0007669"/>
    <property type="project" value="InterPro"/>
</dbReference>
<dbReference type="GO" id="GO:0042274">
    <property type="term" value="P:ribosomal small subunit biogenesis"/>
    <property type="evidence" value="ECO:0007669"/>
    <property type="project" value="TreeGrafter"/>
</dbReference>
<dbReference type="GO" id="GO:0006412">
    <property type="term" value="P:translation"/>
    <property type="evidence" value="ECO:0007669"/>
    <property type="project" value="UniProtKB-UniRule"/>
</dbReference>
<dbReference type="CDD" id="cd00165">
    <property type="entry name" value="S4"/>
    <property type="match status" value="1"/>
</dbReference>
<dbReference type="FunFam" id="3.10.290.10:FF:000001">
    <property type="entry name" value="30S ribosomal protein S4"/>
    <property type="match status" value="1"/>
</dbReference>
<dbReference type="FunFam" id="1.10.1050.10:FF:000002">
    <property type="entry name" value="30S ribosomal protein S4, chloroplastic"/>
    <property type="match status" value="1"/>
</dbReference>
<dbReference type="Gene3D" id="1.10.1050.10">
    <property type="entry name" value="Ribosomal Protein S4 Delta 41, Chain A, domain 1"/>
    <property type="match status" value="1"/>
</dbReference>
<dbReference type="Gene3D" id="3.10.290.10">
    <property type="entry name" value="RNA-binding S4 domain"/>
    <property type="match status" value="1"/>
</dbReference>
<dbReference type="HAMAP" id="MF_01306_B">
    <property type="entry name" value="Ribosomal_uS4_B"/>
    <property type="match status" value="1"/>
</dbReference>
<dbReference type="InterPro" id="IPR022801">
    <property type="entry name" value="Ribosomal_uS4"/>
</dbReference>
<dbReference type="InterPro" id="IPR005709">
    <property type="entry name" value="Ribosomal_uS4_bac-type"/>
</dbReference>
<dbReference type="InterPro" id="IPR018079">
    <property type="entry name" value="Ribosomal_uS4_CS"/>
</dbReference>
<dbReference type="InterPro" id="IPR001912">
    <property type="entry name" value="Ribosomal_uS4_N"/>
</dbReference>
<dbReference type="InterPro" id="IPR002942">
    <property type="entry name" value="S4_RNA-bd"/>
</dbReference>
<dbReference type="InterPro" id="IPR036986">
    <property type="entry name" value="S4_RNA-bd_sf"/>
</dbReference>
<dbReference type="NCBIfam" id="NF003717">
    <property type="entry name" value="PRK05327.1"/>
    <property type="match status" value="1"/>
</dbReference>
<dbReference type="NCBIfam" id="TIGR01017">
    <property type="entry name" value="rpsD_bact"/>
    <property type="match status" value="1"/>
</dbReference>
<dbReference type="PANTHER" id="PTHR11831">
    <property type="entry name" value="30S 40S RIBOSOMAL PROTEIN"/>
    <property type="match status" value="1"/>
</dbReference>
<dbReference type="PANTHER" id="PTHR11831:SF4">
    <property type="entry name" value="SMALL RIBOSOMAL SUBUNIT PROTEIN US4M"/>
    <property type="match status" value="1"/>
</dbReference>
<dbReference type="Pfam" id="PF00163">
    <property type="entry name" value="Ribosomal_S4"/>
    <property type="match status" value="1"/>
</dbReference>
<dbReference type="Pfam" id="PF01479">
    <property type="entry name" value="S4"/>
    <property type="match status" value="1"/>
</dbReference>
<dbReference type="SMART" id="SM01390">
    <property type="entry name" value="Ribosomal_S4"/>
    <property type="match status" value="1"/>
</dbReference>
<dbReference type="SMART" id="SM00363">
    <property type="entry name" value="S4"/>
    <property type="match status" value="1"/>
</dbReference>
<dbReference type="SUPFAM" id="SSF55174">
    <property type="entry name" value="Alpha-L RNA-binding motif"/>
    <property type="match status" value="1"/>
</dbReference>
<dbReference type="PROSITE" id="PS00632">
    <property type="entry name" value="RIBOSOMAL_S4"/>
    <property type="match status" value="1"/>
</dbReference>
<dbReference type="PROSITE" id="PS50889">
    <property type="entry name" value="S4"/>
    <property type="match status" value="1"/>
</dbReference>
<organism>
    <name type="scientific">Rhodomonas salina</name>
    <name type="common">Cryptomonas salina</name>
    <dbReference type="NCBI Taxonomy" id="52970"/>
    <lineage>
        <taxon>Eukaryota</taxon>
        <taxon>Cryptophyceae</taxon>
        <taxon>Pyrenomonadales</taxon>
        <taxon>Pyrenomonadaceae</taxon>
        <taxon>Rhodomonas</taxon>
    </lineage>
</organism>
<sequence>MSRYRGAVVRIIRRLGELPGLTRKTTRRNSRPGQHGDQPRKPSEYAIRLEEKQKLRFNYGLTEKQLLRYVKDAKRIKGSTGEALLQLLEMRLDNIVFRLGMAPTIPAARQLVNHGHICVNAKRVSIPSYQCQTTDVISVRNNARSKQLVENYLSFPGLANIPSHLEIDKEKLVGKVNGIIERDWVALQLNELLIVEYYSRKG</sequence>
<reference key="1">
    <citation type="journal article" date="2007" name="Mol. Biol. Evol.">
        <title>Plastid genome sequence of the cryptophyte alga Rhodomonas salina CCMP1319: lateral transfer of putative DNA replication machinery and a test of chromist plastid phylogeny.</title>
        <authorList>
            <person name="Khan H."/>
            <person name="Parks N."/>
            <person name="Kozera C."/>
            <person name="Curtis B.A."/>
            <person name="Parsons B.J."/>
            <person name="Bowman S."/>
            <person name="Archibald J.M."/>
        </authorList>
    </citation>
    <scope>NUCLEOTIDE SEQUENCE [LARGE SCALE GENOMIC DNA]</scope>
    <source>
        <strain>CCMP1319 / NEPCC76 / CS-174</strain>
    </source>
</reference>
<comment type="function">
    <text evidence="1">One of the primary rRNA binding proteins, it binds directly to 16S rRNA where it nucleates assembly of the body of the 30S subunit.</text>
</comment>
<comment type="function">
    <text evidence="1">With S5 and S12 plays an important role in translational accuracy.</text>
</comment>
<comment type="subunit">
    <text evidence="1">Part of the 30S ribosomal subunit. Contacts protein S5. The interaction surface between S4 and S5 is involved in control of translational fidelity (By similarity).</text>
</comment>
<comment type="subcellular location">
    <subcellularLocation>
        <location>Plastid</location>
        <location>Chloroplast</location>
    </subcellularLocation>
</comment>
<comment type="similarity">
    <text evidence="3">Belongs to the universal ribosomal protein uS4 family.</text>
</comment>